<sequence>MPRGFTWLRYLGIFLGVALGNEPLEMWPLTQNEECTVTGFLRDKLQYRSRLQYMKHYFPINYKISVPYEGVFRIANVTRLQRAQVSERELRYLWVLVSLSATESVQDVLLEGHPSWKYLQEVETLLLNVQQGLTDVEVSPKVESVLSLLNAPGPNLKLVRPKALLDNCFRVMELLYCSCCKQSSVLNWQDCEVPSPQSCSPEPSLQYAATQLYPPPPWSPSSPPHSTGSVRPVRAQGEGLLP</sequence>
<name>IL34_HUMAN</name>
<dbReference type="EMBL" id="EU599219">
    <property type="protein sequence ID" value="ACD13474.1"/>
    <property type="molecule type" value="mRNA"/>
</dbReference>
<dbReference type="EMBL" id="EU636994">
    <property type="protein sequence ID" value="ACD13452.1"/>
    <property type="molecule type" value="mRNA"/>
</dbReference>
<dbReference type="EMBL" id="AK172744">
    <property type="protein sequence ID" value="BAD18731.1"/>
    <property type="molecule type" value="mRNA"/>
</dbReference>
<dbReference type="EMBL" id="AK314913">
    <property type="protein sequence ID" value="BAG37425.1"/>
    <property type="molecule type" value="mRNA"/>
</dbReference>
<dbReference type="EMBL" id="AC020763">
    <property type="status" value="NOT_ANNOTATED_CDS"/>
    <property type="molecule type" value="Genomic_DNA"/>
</dbReference>
<dbReference type="EMBL" id="CH471241">
    <property type="protein sequence ID" value="EAW51801.1"/>
    <property type="molecule type" value="Genomic_DNA"/>
</dbReference>
<dbReference type="EMBL" id="BC029804">
    <property type="protein sequence ID" value="AAH29804.1"/>
    <property type="molecule type" value="mRNA"/>
</dbReference>
<dbReference type="CCDS" id="CCDS10895.1">
    <molecule id="Q6ZMJ4-1"/>
</dbReference>
<dbReference type="RefSeq" id="NP_001166242.1">
    <molecule id="Q6ZMJ4-2"/>
    <property type="nucleotide sequence ID" value="NM_001172771.2"/>
</dbReference>
<dbReference type="RefSeq" id="NP_001166243.1">
    <molecule id="Q6ZMJ4-1"/>
    <property type="nucleotide sequence ID" value="NM_001172772.2"/>
</dbReference>
<dbReference type="RefSeq" id="NP_001380422.1">
    <molecule id="Q6ZMJ4-1"/>
    <property type="nucleotide sequence ID" value="NM_001393493.1"/>
</dbReference>
<dbReference type="RefSeq" id="NP_001380423.1">
    <molecule id="Q6ZMJ4-1"/>
    <property type="nucleotide sequence ID" value="NM_001393494.1"/>
</dbReference>
<dbReference type="RefSeq" id="NP_001380424.1">
    <molecule id="Q6ZMJ4-2"/>
    <property type="nucleotide sequence ID" value="NM_001393495.1"/>
</dbReference>
<dbReference type="RefSeq" id="NP_001380425.1">
    <molecule id="Q6ZMJ4-2"/>
    <property type="nucleotide sequence ID" value="NM_001393496.1"/>
</dbReference>
<dbReference type="RefSeq" id="NP_689669.2">
    <molecule id="Q6ZMJ4-1"/>
    <property type="nucleotide sequence ID" value="NM_152456.3"/>
</dbReference>
<dbReference type="RefSeq" id="XP_011521204.1">
    <property type="nucleotide sequence ID" value="XM_011522902.2"/>
</dbReference>
<dbReference type="RefSeq" id="XP_011521205.1">
    <property type="nucleotide sequence ID" value="XM_011522903.2"/>
</dbReference>
<dbReference type="RefSeq" id="XP_047289604.1">
    <molecule id="Q6ZMJ4-1"/>
    <property type="nucleotide sequence ID" value="XM_047433648.1"/>
</dbReference>
<dbReference type="RefSeq" id="XP_047289605.1">
    <molecule id="Q6ZMJ4-1"/>
    <property type="nucleotide sequence ID" value="XM_047433649.1"/>
</dbReference>
<dbReference type="RefSeq" id="XP_047289606.1">
    <molecule id="Q6ZMJ4-1"/>
    <property type="nucleotide sequence ID" value="XM_047433650.1"/>
</dbReference>
<dbReference type="RefSeq" id="XP_047289607.1">
    <molecule id="Q6ZMJ4-1"/>
    <property type="nucleotide sequence ID" value="XM_047433651.1"/>
</dbReference>
<dbReference type="RefSeq" id="XP_054235643.1">
    <molecule id="Q6ZMJ4-1"/>
    <property type="nucleotide sequence ID" value="XM_054379668.1"/>
</dbReference>
<dbReference type="RefSeq" id="XP_054235644.1">
    <molecule id="Q6ZMJ4-1"/>
    <property type="nucleotide sequence ID" value="XM_054379669.1"/>
</dbReference>
<dbReference type="RefSeq" id="XP_054235645.1">
    <molecule id="Q6ZMJ4-1"/>
    <property type="nucleotide sequence ID" value="XM_054379670.1"/>
</dbReference>
<dbReference type="RefSeq" id="XP_054235646.1">
    <molecule id="Q6ZMJ4-1"/>
    <property type="nucleotide sequence ID" value="XM_054379671.1"/>
</dbReference>
<dbReference type="RefSeq" id="XP_054235647.1">
    <molecule id="Q6ZMJ4-1"/>
    <property type="nucleotide sequence ID" value="XM_054379672.1"/>
</dbReference>
<dbReference type="RefSeq" id="XP_054235648.1">
    <molecule id="Q6ZMJ4-1"/>
    <property type="nucleotide sequence ID" value="XM_054379673.1"/>
</dbReference>
<dbReference type="RefSeq" id="XP_054235649.1">
    <molecule id="Q6ZMJ4-2"/>
    <property type="nucleotide sequence ID" value="XM_054379674.1"/>
</dbReference>
<dbReference type="PDB" id="4DKC">
    <property type="method" value="X-ray"/>
    <property type="resolution" value="1.85 A"/>
    <property type="chains" value="A/B=21-193"/>
</dbReference>
<dbReference type="PDB" id="4DKD">
    <property type="method" value="X-ray"/>
    <property type="resolution" value="3.00 A"/>
    <property type="chains" value="A/B=21-193"/>
</dbReference>
<dbReference type="PDB" id="4DKE">
    <property type="method" value="X-ray"/>
    <property type="resolution" value="3.00 A"/>
    <property type="chains" value="A/B=21-193"/>
</dbReference>
<dbReference type="PDB" id="4DKF">
    <property type="method" value="X-ray"/>
    <property type="resolution" value="2.61 A"/>
    <property type="chains" value="A/B=21-193"/>
</dbReference>
<dbReference type="PDBsum" id="4DKC"/>
<dbReference type="PDBsum" id="4DKD"/>
<dbReference type="PDBsum" id="4DKE"/>
<dbReference type="PDBsum" id="4DKF"/>
<dbReference type="SMR" id="Q6ZMJ4"/>
<dbReference type="BioGRID" id="126985">
    <property type="interactions" value="3"/>
</dbReference>
<dbReference type="ComplexPortal" id="CPX-10333">
    <property type="entry name" value="IL34-CSF1R complex"/>
</dbReference>
<dbReference type="DIP" id="DIP-50037N"/>
<dbReference type="FunCoup" id="Q6ZMJ4">
    <property type="interactions" value="532"/>
</dbReference>
<dbReference type="IntAct" id="Q6ZMJ4">
    <property type="interactions" value="3"/>
</dbReference>
<dbReference type="STRING" id="9606.ENSP00000397863"/>
<dbReference type="GlyCosmos" id="Q6ZMJ4">
    <property type="glycosylation" value="1 site, No reported glycans"/>
</dbReference>
<dbReference type="GlyGen" id="Q6ZMJ4">
    <property type="glycosylation" value="1 site, 3 N-linked glycans (1 site)"/>
</dbReference>
<dbReference type="iPTMnet" id="Q6ZMJ4"/>
<dbReference type="BioMuta" id="IL34"/>
<dbReference type="DMDM" id="74710540"/>
<dbReference type="MassIVE" id="Q6ZMJ4"/>
<dbReference type="PaxDb" id="9606-ENSP00000397863"/>
<dbReference type="PeptideAtlas" id="Q6ZMJ4"/>
<dbReference type="ProteomicsDB" id="67882">
    <molecule id="Q6ZMJ4-1"/>
</dbReference>
<dbReference type="ProteomicsDB" id="67883">
    <molecule id="Q6ZMJ4-2"/>
</dbReference>
<dbReference type="ABCD" id="Q6ZMJ4">
    <property type="antibodies" value="2 sequenced antibodies"/>
</dbReference>
<dbReference type="Antibodypedia" id="30010">
    <property type="antibodies" value="454 antibodies from 32 providers"/>
</dbReference>
<dbReference type="DNASU" id="146433"/>
<dbReference type="Ensembl" id="ENST00000288098.7">
    <molecule id="Q6ZMJ4-1"/>
    <property type="protein sequence ID" value="ENSP00000288098.2"/>
    <property type="gene ID" value="ENSG00000157368.12"/>
</dbReference>
<dbReference type="Ensembl" id="ENST00000429149.6">
    <molecule id="Q6ZMJ4-1"/>
    <property type="protein sequence ID" value="ENSP00000397863.2"/>
    <property type="gene ID" value="ENSG00000157368.12"/>
</dbReference>
<dbReference type="GeneID" id="146433"/>
<dbReference type="KEGG" id="hsa:146433"/>
<dbReference type="MANE-Select" id="ENST00000288098.7">
    <property type="protein sequence ID" value="ENSP00000288098.2"/>
    <property type="RefSeq nucleotide sequence ID" value="NM_001393494.1"/>
    <property type="RefSeq protein sequence ID" value="NP_001380423.1"/>
</dbReference>
<dbReference type="UCSC" id="uc002ezh.2">
    <molecule id="Q6ZMJ4-1"/>
    <property type="organism name" value="human"/>
</dbReference>
<dbReference type="AGR" id="HGNC:28529"/>
<dbReference type="CTD" id="146433"/>
<dbReference type="DisGeNET" id="146433"/>
<dbReference type="GeneCards" id="IL34"/>
<dbReference type="HGNC" id="HGNC:28529">
    <property type="gene designation" value="IL34"/>
</dbReference>
<dbReference type="HPA" id="ENSG00000157368">
    <property type="expression patterns" value="Tissue enhanced (lymphoid tissue, skin)"/>
</dbReference>
<dbReference type="MIM" id="612081">
    <property type="type" value="gene"/>
</dbReference>
<dbReference type="neXtProt" id="NX_Q6ZMJ4"/>
<dbReference type="NIAGADS" id="ENSG00000157368"/>
<dbReference type="OpenTargets" id="ENSG00000157368"/>
<dbReference type="PharmGKB" id="PA162392024"/>
<dbReference type="VEuPathDB" id="HostDB:ENSG00000157368"/>
<dbReference type="eggNOG" id="ENOG502S2ET">
    <property type="taxonomic scope" value="Eukaryota"/>
</dbReference>
<dbReference type="GeneTree" id="ENSGT00390000000932"/>
<dbReference type="InParanoid" id="Q6ZMJ4"/>
<dbReference type="OMA" id="WQDCELP"/>
<dbReference type="OrthoDB" id="9902423at2759"/>
<dbReference type="PAN-GO" id="Q6ZMJ4">
    <property type="GO annotations" value="6 GO annotations based on evolutionary models"/>
</dbReference>
<dbReference type="PhylomeDB" id="Q6ZMJ4"/>
<dbReference type="TreeFam" id="TF337386"/>
<dbReference type="PathwayCommons" id="Q6ZMJ4"/>
<dbReference type="Reactome" id="R-HSA-449836">
    <property type="pathway name" value="Other interleukin signaling"/>
</dbReference>
<dbReference type="Reactome" id="R-HSA-9680350">
    <property type="pathway name" value="Signaling by CSF1 (M-CSF) in myeloid cells"/>
</dbReference>
<dbReference type="SignaLink" id="Q6ZMJ4"/>
<dbReference type="SIGNOR" id="Q6ZMJ4"/>
<dbReference type="BioGRID-ORCS" id="146433">
    <property type="hits" value="13 hits in 1145 CRISPR screens"/>
</dbReference>
<dbReference type="ChiTaRS" id="IL34">
    <property type="organism name" value="human"/>
</dbReference>
<dbReference type="EvolutionaryTrace" id="Q6ZMJ4"/>
<dbReference type="GeneWiki" id="Interleukin_34"/>
<dbReference type="GenomeRNAi" id="146433"/>
<dbReference type="Pharos" id="Q6ZMJ4">
    <property type="development level" value="Tbio"/>
</dbReference>
<dbReference type="PRO" id="PR:Q6ZMJ4"/>
<dbReference type="Proteomes" id="UP000005640">
    <property type="component" value="Chromosome 16"/>
</dbReference>
<dbReference type="RNAct" id="Q6ZMJ4">
    <property type="molecule type" value="protein"/>
</dbReference>
<dbReference type="Bgee" id="ENSG00000157368">
    <property type="expression patterns" value="Expressed in tibial nerve and 162 other cell types or tissues"/>
</dbReference>
<dbReference type="ExpressionAtlas" id="Q6ZMJ4">
    <property type="expression patterns" value="baseline and differential"/>
</dbReference>
<dbReference type="GO" id="GO:0005576">
    <property type="term" value="C:extracellular region"/>
    <property type="evidence" value="ECO:0000304"/>
    <property type="project" value="Reactome"/>
</dbReference>
<dbReference type="GO" id="GO:0005615">
    <property type="term" value="C:extracellular space"/>
    <property type="evidence" value="ECO:0000314"/>
    <property type="project" value="UniProtKB"/>
</dbReference>
<dbReference type="GO" id="GO:0005125">
    <property type="term" value="F:cytokine activity"/>
    <property type="evidence" value="ECO:0007669"/>
    <property type="project" value="UniProtKB-KW"/>
</dbReference>
<dbReference type="GO" id="GO:0008083">
    <property type="term" value="F:growth factor activity"/>
    <property type="evidence" value="ECO:0007669"/>
    <property type="project" value="UniProtKB-KW"/>
</dbReference>
<dbReference type="GO" id="GO:0042802">
    <property type="term" value="F:identical protein binding"/>
    <property type="evidence" value="ECO:0000353"/>
    <property type="project" value="IntAct"/>
</dbReference>
<dbReference type="GO" id="GO:0005157">
    <property type="term" value="F:macrophage colony-stimulating factor receptor binding"/>
    <property type="evidence" value="ECO:0000314"/>
    <property type="project" value="UniProtKB"/>
</dbReference>
<dbReference type="GO" id="GO:0006954">
    <property type="term" value="P:inflammatory response"/>
    <property type="evidence" value="ECO:0007669"/>
    <property type="project" value="UniProtKB-KW"/>
</dbReference>
<dbReference type="GO" id="GO:0045087">
    <property type="term" value="P:innate immune response"/>
    <property type="evidence" value="ECO:0007669"/>
    <property type="project" value="UniProtKB-KW"/>
</dbReference>
<dbReference type="GO" id="GO:0061514">
    <property type="term" value="P:interleukin-34-mediated signaling pathway"/>
    <property type="evidence" value="ECO:0000314"/>
    <property type="project" value="ARUK-UCL"/>
</dbReference>
<dbReference type="GO" id="GO:0061518">
    <property type="term" value="P:microglial cell proliferation"/>
    <property type="evidence" value="ECO:0007669"/>
    <property type="project" value="Ensembl"/>
</dbReference>
<dbReference type="GO" id="GO:0008284">
    <property type="term" value="P:positive regulation of cell population proliferation"/>
    <property type="evidence" value="ECO:0000314"/>
    <property type="project" value="UniProtKB"/>
</dbReference>
<dbReference type="GO" id="GO:0010628">
    <property type="term" value="P:positive regulation of gene expression"/>
    <property type="evidence" value="ECO:0007669"/>
    <property type="project" value="Ensembl"/>
</dbReference>
<dbReference type="GO" id="GO:0010759">
    <property type="term" value="P:positive regulation of macrophage chemotaxis"/>
    <property type="evidence" value="ECO:0000314"/>
    <property type="project" value="ARUK-UCL"/>
</dbReference>
<dbReference type="GO" id="GO:0045651">
    <property type="term" value="P:positive regulation of macrophage differentiation"/>
    <property type="evidence" value="ECO:0000314"/>
    <property type="project" value="CACAO"/>
</dbReference>
<dbReference type="GO" id="GO:0120041">
    <property type="term" value="P:positive regulation of macrophage proliferation"/>
    <property type="evidence" value="ECO:0000314"/>
    <property type="project" value="ARUK-UCL"/>
</dbReference>
<dbReference type="GO" id="GO:0043410">
    <property type="term" value="P:positive regulation of MAPK cascade"/>
    <property type="evidence" value="ECO:0000314"/>
    <property type="project" value="ARUK-UCL"/>
</dbReference>
<dbReference type="GO" id="GO:0045657">
    <property type="term" value="P:positive regulation of monocyte differentiation"/>
    <property type="evidence" value="ECO:0000314"/>
    <property type="project" value="CACAO"/>
</dbReference>
<dbReference type="GO" id="GO:0048714">
    <property type="term" value="P:positive regulation of oligodendrocyte differentiation"/>
    <property type="evidence" value="ECO:0000250"/>
    <property type="project" value="UniProtKB"/>
</dbReference>
<dbReference type="GO" id="GO:0001934">
    <property type="term" value="P:positive regulation of protein phosphorylation"/>
    <property type="evidence" value="ECO:0000314"/>
    <property type="project" value="UniProtKB"/>
</dbReference>
<dbReference type="FunFam" id="1.20.1250.80:FF:000001">
    <property type="entry name" value="Interleukin-34"/>
    <property type="match status" value="1"/>
</dbReference>
<dbReference type="Gene3D" id="1.20.1250.80">
    <property type="entry name" value="Interleukin-34"/>
    <property type="match status" value="1"/>
</dbReference>
<dbReference type="InterPro" id="IPR020415">
    <property type="entry name" value="IL-34"/>
</dbReference>
<dbReference type="InterPro" id="IPR038328">
    <property type="entry name" value="IL-34_sf"/>
</dbReference>
<dbReference type="PANTHER" id="PTHR28606">
    <property type="entry name" value="INTERLEUKIN-34"/>
    <property type="match status" value="1"/>
</dbReference>
<dbReference type="PANTHER" id="PTHR28606:SF1">
    <property type="entry name" value="INTERLEUKIN-34"/>
    <property type="match status" value="1"/>
</dbReference>
<dbReference type="Pfam" id="PF15036">
    <property type="entry name" value="IL34"/>
    <property type="match status" value="1"/>
</dbReference>
<dbReference type="PRINTS" id="PR01938">
    <property type="entry name" value="INTRLEUKIN34"/>
</dbReference>
<comment type="function">
    <text evidence="4 5 6 7">Cytokine that promotes the proliferation, survival and differentiation of monocytes and macrophages. Promotes the release of pro-inflammatory chemokines, and thereby plays an important role in innate immunity and in inflammatory processes. Plays an important role in the regulation of osteoclast proliferation and differentiation, and in the regulation of bone resorption. Signaling via CSF1R and its downstream effectors stimulates phosphorylation of MAPK1/ERK2 AND MAPK3/ERK1.</text>
</comment>
<comment type="subunit">
    <text evidence="4 5 6">Homodimer. Interacts with CSF1R.</text>
</comment>
<comment type="interaction">
    <interactant intactId="EBI-948761">
        <id>Q6ZMJ4</id>
    </interactant>
    <interactant intactId="EBI-11958008">
        <id>Q5T754</id>
        <label>LCE1F</label>
    </interactant>
    <organismsDiffer>false</organismsDiffer>
    <experiments>3</experiments>
</comment>
<comment type="interaction">
    <interactant intactId="EBI-15978980">
        <id>Q6ZMJ4-1</id>
    </interactant>
    <interactant intactId="EBI-2835440">
        <id>P07333</id>
        <label>CSF1R</label>
    </interactant>
    <organismsDiffer>false</organismsDiffer>
    <experiments>9</experiments>
</comment>
<comment type="interaction">
    <interactant intactId="EBI-15978980">
        <id>Q6ZMJ4-1</id>
    </interactant>
    <interactant intactId="EBI-15978980">
        <id>Q6ZMJ4-1</id>
        <label>IL34</label>
    </interactant>
    <organismsDiffer>false</organismsDiffer>
    <experiments>2</experiments>
</comment>
<comment type="subcellular location">
    <subcellularLocation>
        <location evidence="4">Secreted</location>
    </subcellularLocation>
</comment>
<comment type="alternative products">
    <event type="alternative splicing"/>
    <isoform>
        <id>Q6ZMJ4-1</id>
        <name>1</name>
        <sequence type="displayed"/>
    </isoform>
    <isoform>
        <id>Q6ZMJ4-2</id>
        <name>2</name>
        <sequence type="described" ref="VSP_035079"/>
    </isoform>
</comment>
<comment type="tissue specificity">
    <text evidence="4">Detected in the sinusoidal epithelium in the red pulp of spleen (at protein level). Predominantly expressed in spleen. Also detected in a range of other tissues including heart, brain, lung, liver, kidney, thymus, testis, ovary, small intestine, prostate and colon.</text>
</comment>
<comment type="similarity">
    <text evidence="9">Belongs to the IL-34 family.</text>
</comment>
<accession>Q6ZMJ4</accession>
<accession>B2RC28</accession>
<accession>B2Z4A8</accession>
<accession>B2ZC70</accession>
<accession>Q8N6L2</accession>
<gene>
    <name type="primary">IL34</name>
    <name type="synonym">C16orf77</name>
</gene>
<keyword id="KW-0002">3D-structure</keyword>
<keyword id="KW-0025">Alternative splicing</keyword>
<keyword id="KW-0202">Cytokine</keyword>
<keyword id="KW-0325">Glycoprotein</keyword>
<keyword id="KW-0339">Growth factor</keyword>
<keyword id="KW-0391">Immunity</keyword>
<keyword id="KW-0395">Inflammatory response</keyword>
<keyword id="KW-0399">Innate immunity</keyword>
<keyword id="KW-1267">Proteomics identification</keyword>
<keyword id="KW-1185">Reference proteome</keyword>
<keyword id="KW-0964">Secreted</keyword>
<keyword id="KW-0732">Signal</keyword>
<organism>
    <name type="scientific">Homo sapiens</name>
    <name type="common">Human</name>
    <dbReference type="NCBI Taxonomy" id="9606"/>
    <lineage>
        <taxon>Eukaryota</taxon>
        <taxon>Metazoa</taxon>
        <taxon>Chordata</taxon>
        <taxon>Craniata</taxon>
        <taxon>Vertebrata</taxon>
        <taxon>Euteleostomi</taxon>
        <taxon>Mammalia</taxon>
        <taxon>Eutheria</taxon>
        <taxon>Euarchontoglires</taxon>
        <taxon>Primates</taxon>
        <taxon>Haplorrhini</taxon>
        <taxon>Catarrhini</taxon>
        <taxon>Hominidae</taxon>
        <taxon>Homo</taxon>
    </lineage>
</organism>
<proteinExistence type="evidence at protein level"/>
<protein>
    <recommendedName>
        <fullName>Interleukin-34</fullName>
        <shortName>IL-34</shortName>
    </recommendedName>
</protein>
<reference key="1">
    <citation type="journal article" date="2008" name="Science">
        <title>Discovery of a cytokine and its receptor by functional screening of the extracellular proteome.</title>
        <authorList>
            <person name="Lin H."/>
            <person name="Lee E."/>
            <person name="Hestir K."/>
            <person name="Leo C."/>
            <person name="Huang M."/>
            <person name="Bosch E."/>
            <person name="Halenbeck R."/>
            <person name="Wu G."/>
            <person name="Zhou A."/>
            <person name="Behrens D."/>
            <person name="Hollenbaugh D."/>
            <person name="Linnemann T."/>
            <person name="Qin M."/>
            <person name="Wong J."/>
            <person name="Chu K."/>
            <person name="Doberstein S.K."/>
            <person name="Williams L.T."/>
        </authorList>
    </citation>
    <scope>NUCLEOTIDE SEQUENCE [MRNA] (ISOFORMS 1 AND 2)</scope>
    <scope>FUNCTION</scope>
    <scope>SUBUNIT</scope>
    <scope>SUBCELLULAR LOCATION</scope>
    <scope>TISSUE SPECIFICITY</scope>
    <scope>VARIANT GLN-123</scope>
</reference>
<reference key="2">
    <citation type="journal article" date="2004" name="Nat. Genet.">
        <title>Complete sequencing and characterization of 21,243 full-length human cDNAs.</title>
        <authorList>
            <person name="Ota T."/>
            <person name="Suzuki Y."/>
            <person name="Nishikawa T."/>
            <person name="Otsuki T."/>
            <person name="Sugiyama T."/>
            <person name="Irie R."/>
            <person name="Wakamatsu A."/>
            <person name="Hayashi K."/>
            <person name="Sato H."/>
            <person name="Nagai K."/>
            <person name="Kimura K."/>
            <person name="Makita H."/>
            <person name="Sekine M."/>
            <person name="Obayashi M."/>
            <person name="Nishi T."/>
            <person name="Shibahara T."/>
            <person name="Tanaka T."/>
            <person name="Ishii S."/>
            <person name="Yamamoto J."/>
            <person name="Saito K."/>
            <person name="Kawai Y."/>
            <person name="Isono Y."/>
            <person name="Nakamura Y."/>
            <person name="Nagahari K."/>
            <person name="Murakami K."/>
            <person name="Yasuda T."/>
            <person name="Iwayanagi T."/>
            <person name="Wagatsuma M."/>
            <person name="Shiratori A."/>
            <person name="Sudo H."/>
            <person name="Hosoiri T."/>
            <person name="Kaku Y."/>
            <person name="Kodaira H."/>
            <person name="Kondo H."/>
            <person name="Sugawara M."/>
            <person name="Takahashi M."/>
            <person name="Kanda K."/>
            <person name="Yokoi T."/>
            <person name="Furuya T."/>
            <person name="Kikkawa E."/>
            <person name="Omura Y."/>
            <person name="Abe K."/>
            <person name="Kamihara K."/>
            <person name="Katsuta N."/>
            <person name="Sato K."/>
            <person name="Tanikawa M."/>
            <person name="Yamazaki M."/>
            <person name="Ninomiya K."/>
            <person name="Ishibashi T."/>
            <person name="Yamashita H."/>
            <person name="Murakawa K."/>
            <person name="Fujimori K."/>
            <person name="Tanai H."/>
            <person name="Kimata M."/>
            <person name="Watanabe M."/>
            <person name="Hiraoka S."/>
            <person name="Chiba Y."/>
            <person name="Ishida S."/>
            <person name="Ono Y."/>
            <person name="Takiguchi S."/>
            <person name="Watanabe S."/>
            <person name="Yosida M."/>
            <person name="Hotuta T."/>
            <person name="Kusano J."/>
            <person name="Kanehori K."/>
            <person name="Takahashi-Fujii A."/>
            <person name="Hara H."/>
            <person name="Tanase T.-O."/>
            <person name="Nomura Y."/>
            <person name="Togiya S."/>
            <person name="Komai F."/>
            <person name="Hara R."/>
            <person name="Takeuchi K."/>
            <person name="Arita M."/>
            <person name="Imose N."/>
            <person name="Musashino K."/>
            <person name="Yuuki H."/>
            <person name="Oshima A."/>
            <person name="Sasaki N."/>
            <person name="Aotsuka S."/>
            <person name="Yoshikawa Y."/>
            <person name="Matsunawa H."/>
            <person name="Ichihara T."/>
            <person name="Shiohata N."/>
            <person name="Sano S."/>
            <person name="Moriya S."/>
            <person name="Momiyama H."/>
            <person name="Satoh N."/>
            <person name="Takami S."/>
            <person name="Terashima Y."/>
            <person name="Suzuki O."/>
            <person name="Nakagawa S."/>
            <person name="Senoh A."/>
            <person name="Mizoguchi H."/>
            <person name="Goto Y."/>
            <person name="Shimizu F."/>
            <person name="Wakebe H."/>
            <person name="Hishigaki H."/>
            <person name="Watanabe T."/>
            <person name="Sugiyama A."/>
            <person name="Takemoto M."/>
            <person name="Kawakami B."/>
            <person name="Yamazaki M."/>
            <person name="Watanabe K."/>
            <person name="Kumagai A."/>
            <person name="Itakura S."/>
            <person name="Fukuzumi Y."/>
            <person name="Fujimori Y."/>
            <person name="Komiyama M."/>
            <person name="Tashiro H."/>
            <person name="Tanigami A."/>
            <person name="Fujiwara T."/>
            <person name="Ono T."/>
            <person name="Yamada K."/>
            <person name="Fujii Y."/>
            <person name="Ozaki K."/>
            <person name="Hirao M."/>
            <person name="Ohmori Y."/>
            <person name="Kawabata A."/>
            <person name="Hikiji T."/>
            <person name="Kobatake N."/>
            <person name="Inagaki H."/>
            <person name="Ikema Y."/>
            <person name="Okamoto S."/>
            <person name="Okitani R."/>
            <person name="Kawakami T."/>
            <person name="Noguchi S."/>
            <person name="Itoh T."/>
            <person name="Shigeta K."/>
            <person name="Senba T."/>
            <person name="Matsumura K."/>
            <person name="Nakajima Y."/>
            <person name="Mizuno T."/>
            <person name="Morinaga M."/>
            <person name="Sasaki M."/>
            <person name="Togashi T."/>
            <person name="Oyama M."/>
            <person name="Hata H."/>
            <person name="Watanabe M."/>
            <person name="Komatsu T."/>
            <person name="Mizushima-Sugano J."/>
            <person name="Satoh T."/>
            <person name="Shirai Y."/>
            <person name="Takahashi Y."/>
            <person name="Nakagawa K."/>
            <person name="Okumura K."/>
            <person name="Nagase T."/>
            <person name="Nomura N."/>
            <person name="Kikuchi H."/>
            <person name="Masuho Y."/>
            <person name="Yamashita R."/>
            <person name="Nakai K."/>
            <person name="Yada T."/>
            <person name="Nakamura Y."/>
            <person name="Ohara O."/>
            <person name="Isogai T."/>
            <person name="Sugano S."/>
        </authorList>
    </citation>
    <scope>NUCLEOTIDE SEQUENCE [LARGE SCALE MRNA] (ISOFORM 1)</scope>
    <scope>VARIANT GLN-123</scope>
    <source>
        <tissue>Adipose tissue</tissue>
        <tissue>Amygdala</tissue>
    </source>
</reference>
<reference key="3">
    <citation type="journal article" date="2004" name="Nature">
        <title>The sequence and analysis of duplication-rich human chromosome 16.</title>
        <authorList>
            <person name="Martin J."/>
            <person name="Han C."/>
            <person name="Gordon L.A."/>
            <person name="Terry A."/>
            <person name="Prabhakar S."/>
            <person name="She X."/>
            <person name="Xie G."/>
            <person name="Hellsten U."/>
            <person name="Chan Y.M."/>
            <person name="Altherr M."/>
            <person name="Couronne O."/>
            <person name="Aerts A."/>
            <person name="Bajorek E."/>
            <person name="Black S."/>
            <person name="Blumer H."/>
            <person name="Branscomb E."/>
            <person name="Brown N.C."/>
            <person name="Bruno W.J."/>
            <person name="Buckingham J.M."/>
            <person name="Callen D.F."/>
            <person name="Campbell C.S."/>
            <person name="Campbell M.L."/>
            <person name="Campbell E.W."/>
            <person name="Caoile C."/>
            <person name="Challacombe J.F."/>
            <person name="Chasteen L.A."/>
            <person name="Chertkov O."/>
            <person name="Chi H.C."/>
            <person name="Christensen M."/>
            <person name="Clark L.M."/>
            <person name="Cohn J.D."/>
            <person name="Denys M."/>
            <person name="Detter J.C."/>
            <person name="Dickson M."/>
            <person name="Dimitrijevic-Bussod M."/>
            <person name="Escobar J."/>
            <person name="Fawcett J.J."/>
            <person name="Flowers D."/>
            <person name="Fotopulos D."/>
            <person name="Glavina T."/>
            <person name="Gomez M."/>
            <person name="Gonzales E."/>
            <person name="Goodstein D."/>
            <person name="Goodwin L.A."/>
            <person name="Grady D.L."/>
            <person name="Grigoriev I."/>
            <person name="Groza M."/>
            <person name="Hammon N."/>
            <person name="Hawkins T."/>
            <person name="Haydu L."/>
            <person name="Hildebrand C.E."/>
            <person name="Huang W."/>
            <person name="Israni S."/>
            <person name="Jett J."/>
            <person name="Jewett P.B."/>
            <person name="Kadner K."/>
            <person name="Kimball H."/>
            <person name="Kobayashi A."/>
            <person name="Krawczyk M.-C."/>
            <person name="Leyba T."/>
            <person name="Longmire J.L."/>
            <person name="Lopez F."/>
            <person name="Lou Y."/>
            <person name="Lowry S."/>
            <person name="Ludeman T."/>
            <person name="Manohar C.F."/>
            <person name="Mark G.A."/>
            <person name="McMurray K.L."/>
            <person name="Meincke L.J."/>
            <person name="Morgan J."/>
            <person name="Moyzis R.K."/>
            <person name="Mundt M.O."/>
            <person name="Munk A.C."/>
            <person name="Nandkeshwar R.D."/>
            <person name="Pitluck S."/>
            <person name="Pollard M."/>
            <person name="Predki P."/>
            <person name="Parson-Quintana B."/>
            <person name="Ramirez L."/>
            <person name="Rash S."/>
            <person name="Retterer J."/>
            <person name="Ricke D.O."/>
            <person name="Robinson D.L."/>
            <person name="Rodriguez A."/>
            <person name="Salamov A."/>
            <person name="Saunders E.H."/>
            <person name="Scott D."/>
            <person name="Shough T."/>
            <person name="Stallings R.L."/>
            <person name="Stalvey M."/>
            <person name="Sutherland R.D."/>
            <person name="Tapia R."/>
            <person name="Tesmer J.G."/>
            <person name="Thayer N."/>
            <person name="Thompson L.S."/>
            <person name="Tice H."/>
            <person name="Torney D.C."/>
            <person name="Tran-Gyamfi M."/>
            <person name="Tsai M."/>
            <person name="Ulanovsky L.E."/>
            <person name="Ustaszewska A."/>
            <person name="Vo N."/>
            <person name="White P.S."/>
            <person name="Williams A.L."/>
            <person name="Wills P.L."/>
            <person name="Wu J.-R."/>
            <person name="Wu K."/>
            <person name="Yang J."/>
            <person name="DeJong P."/>
            <person name="Bruce D."/>
            <person name="Doggett N.A."/>
            <person name="Deaven L."/>
            <person name="Schmutz J."/>
            <person name="Grimwood J."/>
            <person name="Richardson P."/>
            <person name="Rokhsar D.S."/>
            <person name="Eichler E.E."/>
            <person name="Gilna P."/>
            <person name="Lucas S.M."/>
            <person name="Myers R.M."/>
            <person name="Rubin E.M."/>
            <person name="Pennacchio L.A."/>
        </authorList>
    </citation>
    <scope>NUCLEOTIDE SEQUENCE [LARGE SCALE GENOMIC DNA]</scope>
</reference>
<reference key="4">
    <citation type="submission" date="2005-07" db="EMBL/GenBank/DDBJ databases">
        <authorList>
            <person name="Mural R.J."/>
            <person name="Istrail S."/>
            <person name="Sutton G.G."/>
            <person name="Florea L."/>
            <person name="Halpern A.L."/>
            <person name="Mobarry C.M."/>
            <person name="Lippert R."/>
            <person name="Walenz B."/>
            <person name="Shatkay H."/>
            <person name="Dew I."/>
            <person name="Miller J.R."/>
            <person name="Flanigan M.J."/>
            <person name="Edwards N.J."/>
            <person name="Bolanos R."/>
            <person name="Fasulo D."/>
            <person name="Halldorsson B.V."/>
            <person name="Hannenhalli S."/>
            <person name="Turner R."/>
            <person name="Yooseph S."/>
            <person name="Lu F."/>
            <person name="Nusskern D.R."/>
            <person name="Shue B.C."/>
            <person name="Zheng X.H."/>
            <person name="Zhong F."/>
            <person name="Delcher A.L."/>
            <person name="Huson D.H."/>
            <person name="Kravitz S.A."/>
            <person name="Mouchard L."/>
            <person name="Reinert K."/>
            <person name="Remington K.A."/>
            <person name="Clark A.G."/>
            <person name="Waterman M.S."/>
            <person name="Eichler E.E."/>
            <person name="Adams M.D."/>
            <person name="Hunkapiller M.W."/>
            <person name="Myers E.W."/>
            <person name="Venter J.C."/>
        </authorList>
    </citation>
    <scope>NUCLEOTIDE SEQUENCE [LARGE SCALE GENOMIC DNA]</scope>
</reference>
<reference key="5">
    <citation type="journal article" date="2004" name="Genome Res.">
        <title>The status, quality, and expansion of the NIH full-length cDNA project: the Mammalian Gene Collection (MGC).</title>
        <authorList>
            <consortium name="The MGC Project Team"/>
        </authorList>
    </citation>
    <scope>NUCLEOTIDE SEQUENCE [LARGE SCALE MRNA] (ISOFORM 1)</scope>
    <source>
        <tissue>Brain</tissue>
    </source>
</reference>
<reference key="6">
    <citation type="journal article" date="2010" name="Cell Death Differ.">
        <title>IL-34 and M-CSF share the receptor Fms but are not identical in biological activity and signal activation.</title>
        <authorList>
            <person name="Chihara T."/>
            <person name="Suzu S."/>
            <person name="Hassan R."/>
            <person name="Chutiwitoonchai N."/>
            <person name="Hiyoshi M."/>
            <person name="Motoyoshi K."/>
            <person name="Kimura F."/>
            <person name="Okada S."/>
        </authorList>
    </citation>
    <scope>FUNCTION</scope>
    <scope>INTERACTION WITH CSF1R</scope>
</reference>
<reference key="7">
    <citation type="journal article" date="2010" name="Cytokine">
        <title>Macrophage-colony stimulating factor and interleukin-34 induce chemokines in human whole blood.</title>
        <authorList>
            <person name="Eda H."/>
            <person name="Zhang J."/>
            <person name="Keith R.H."/>
            <person name="Michener M."/>
            <person name="Beidler D.R."/>
            <person name="Monahan J.B."/>
        </authorList>
    </citation>
    <scope>FUNCTION IN RELEASE OF PRO-INFLAMMATORY CHEMOKINES</scope>
</reference>
<reference key="8">
    <citation type="journal article" date="2010" name="J. Leukoc. Biol.">
        <title>Functional overlap but differential expression of CSF-1 and IL-34 in their CSF-1 receptor-mediated regulation of myeloid cells.</title>
        <authorList>
            <person name="Wei S."/>
            <person name="Nandi S."/>
            <person name="Chitu V."/>
            <person name="Yeung Y.G."/>
            <person name="Yu W."/>
            <person name="Huang M."/>
            <person name="Williams L.T."/>
            <person name="Lin H."/>
            <person name="Stanley E.R."/>
        </authorList>
    </citation>
    <scope>FUNCTION</scope>
    <scope>INTERACTION WITH CSF1R</scope>
</reference>
<feature type="signal peptide" evidence="1">
    <location>
        <begin position="1"/>
        <end position="20"/>
    </location>
</feature>
<feature type="chain" id="PRO_0000294348" description="Interleukin-34">
    <location>
        <begin position="21"/>
        <end position="242"/>
    </location>
</feature>
<feature type="region of interest" description="Disordered" evidence="2">
    <location>
        <begin position="210"/>
        <end position="242"/>
    </location>
</feature>
<feature type="compositionally biased region" description="Pro residues" evidence="2">
    <location>
        <begin position="213"/>
        <end position="223"/>
    </location>
</feature>
<feature type="glycosylation site" description="N-linked (GlcNAc...) asparagine" evidence="1">
    <location>
        <position position="76"/>
    </location>
</feature>
<feature type="splice variant" id="VSP_035079" description="In isoform 2." evidence="8">
    <location>
        <position position="81"/>
    </location>
</feature>
<feature type="sequence variant" id="VAR_033164" description="In dbSNP:rs8046424." evidence="3 4">
    <original>E</original>
    <variation>Q</variation>
    <location>
        <position position="123"/>
    </location>
</feature>
<feature type="sequence variant" id="VAR_056920" description="In dbSNP:rs7206509.">
    <original>S</original>
    <variation>T</variation>
    <location>
        <position position="195"/>
    </location>
</feature>
<feature type="helix" evidence="10">
    <location>
        <begin position="33"/>
        <end position="44"/>
    </location>
</feature>
<feature type="helix" evidence="10">
    <location>
        <begin position="47"/>
        <end position="54"/>
    </location>
</feature>
<feature type="turn" evidence="10">
    <location>
        <begin position="55"/>
        <end position="57"/>
    </location>
</feature>
<feature type="strand" evidence="10">
    <location>
        <begin position="64"/>
        <end position="66"/>
    </location>
</feature>
<feature type="helix" evidence="10">
    <location>
        <begin position="68"/>
        <end position="70"/>
    </location>
</feature>
<feature type="helix" evidence="10">
    <location>
        <begin position="74"/>
        <end position="81"/>
    </location>
</feature>
<feature type="turn" evidence="10">
    <location>
        <begin position="82"/>
        <end position="84"/>
    </location>
</feature>
<feature type="helix" evidence="10">
    <location>
        <begin position="87"/>
        <end position="106"/>
    </location>
</feature>
<feature type="helix" evidence="10">
    <location>
        <begin position="116"/>
        <end position="131"/>
    </location>
</feature>
<feature type="turn" evidence="10">
    <location>
        <begin position="132"/>
        <end position="135"/>
    </location>
</feature>
<feature type="helix" evidence="10">
    <location>
        <begin position="140"/>
        <end position="150"/>
    </location>
</feature>
<feature type="strand" evidence="10">
    <location>
        <begin position="157"/>
        <end position="159"/>
    </location>
</feature>
<feature type="helix" evidence="10">
    <location>
        <begin position="161"/>
        <end position="180"/>
    </location>
</feature>
<feature type="strand" evidence="11">
    <location>
        <begin position="181"/>
        <end position="184"/>
    </location>
</feature>
<feature type="turn" evidence="10">
    <location>
        <begin position="186"/>
        <end position="190"/>
    </location>
</feature>
<evidence type="ECO:0000255" key="1"/>
<evidence type="ECO:0000256" key="2">
    <source>
        <dbReference type="SAM" id="MobiDB-lite"/>
    </source>
</evidence>
<evidence type="ECO:0000269" key="3">
    <source>
    </source>
</evidence>
<evidence type="ECO:0000269" key="4">
    <source>
    </source>
</evidence>
<evidence type="ECO:0000269" key="5">
    <source>
    </source>
</evidence>
<evidence type="ECO:0000269" key="6">
    <source>
    </source>
</evidence>
<evidence type="ECO:0000269" key="7">
    <source>
    </source>
</evidence>
<evidence type="ECO:0000303" key="8">
    <source>
    </source>
</evidence>
<evidence type="ECO:0000305" key="9"/>
<evidence type="ECO:0007829" key="10">
    <source>
        <dbReference type="PDB" id="4DKC"/>
    </source>
</evidence>
<evidence type="ECO:0007829" key="11">
    <source>
        <dbReference type="PDB" id="4DKF"/>
    </source>
</evidence>